<gene>
    <name type="primary">adkA</name>
    <name type="synonym">adk</name>
</gene>
<proteinExistence type="evidence at protein level"/>
<comment type="catalytic activity">
    <reaction>
        <text>AMP + ATP = 2 ADP</text>
        <dbReference type="Rhea" id="RHEA:12973"/>
        <dbReference type="ChEBI" id="CHEBI:30616"/>
        <dbReference type="ChEBI" id="CHEBI:456215"/>
        <dbReference type="ChEBI" id="CHEBI:456216"/>
        <dbReference type="EC" id="2.7.4.3"/>
    </reaction>
</comment>
<comment type="biophysicochemical properties">
    <temperatureDependence>
        <text>Active from 60 to 80 degrees Celsius.</text>
    </temperatureDependence>
</comment>
<comment type="subunit">
    <text evidence="2">Monomer.</text>
</comment>
<comment type="subcellular location">
    <subcellularLocation>
        <location>Cytoplasm</location>
    </subcellularLocation>
</comment>
<comment type="similarity">
    <text evidence="2">Belongs to the archaeal adenylate kinase family.</text>
</comment>
<sequence>MKNKLVVVTGVPGVGGTTITQKAMEKLSEEGINYKMVNFGTVMFEVAQEENLVEDRDQMRKLDPDTQKRIQKLAGRKIAEMVKESPVVVDTHSTIKTPKGYLPGLPVWVLNELNPDIIIVVETSGDEILIRRLNDETRNRDLETTAGIEEHQIMNRAAAMTYGVLTGATVKIIQNKNNLLDYAVEELISVLR</sequence>
<organism>
    <name type="scientific">Methanothermococcus thermolithotrophicus</name>
    <name type="common">Methanococcus thermolithotrophicus</name>
    <dbReference type="NCBI Taxonomy" id="2186"/>
    <lineage>
        <taxon>Archaea</taxon>
        <taxon>Methanobacteriati</taxon>
        <taxon>Methanobacteriota</taxon>
        <taxon>Methanomada group</taxon>
        <taxon>Methanococci</taxon>
        <taxon>Methanococcales</taxon>
        <taxon>Methanococcaceae</taxon>
        <taxon>Methanothermococcus</taxon>
    </lineage>
</organism>
<keyword id="KW-0002">3D-structure</keyword>
<keyword id="KW-0067">ATP-binding</keyword>
<keyword id="KW-0963">Cytoplasm</keyword>
<keyword id="KW-0903">Direct protein sequencing</keyword>
<keyword id="KW-0418">Kinase</keyword>
<keyword id="KW-0547">Nucleotide-binding</keyword>
<keyword id="KW-0808">Transferase</keyword>
<feature type="chain" id="PRO_0000131817" description="Adenylate kinase">
    <location>
        <begin position="1"/>
        <end position="192"/>
    </location>
</feature>
<feature type="binding site" evidence="1">
    <location>
        <begin position="10"/>
        <end position="18"/>
    </location>
    <ligand>
        <name>ATP</name>
        <dbReference type="ChEBI" id="CHEBI:30616"/>
    </ligand>
</feature>
<feature type="strand" evidence="4">
    <location>
        <begin position="5"/>
        <end position="9"/>
    </location>
</feature>
<feature type="helix" evidence="4">
    <location>
        <begin position="16"/>
        <end position="28"/>
    </location>
</feature>
<feature type="turn" evidence="4">
    <location>
        <begin position="29"/>
        <end position="31"/>
    </location>
</feature>
<feature type="strand" evidence="4">
    <location>
        <begin position="35"/>
        <end position="38"/>
    </location>
</feature>
<feature type="helix" evidence="4">
    <location>
        <begin position="39"/>
        <end position="49"/>
    </location>
</feature>
<feature type="helix" evidence="4">
    <location>
        <begin position="56"/>
        <end position="58"/>
    </location>
</feature>
<feature type="helix" evidence="4">
    <location>
        <begin position="64"/>
        <end position="81"/>
    </location>
</feature>
<feature type="turn" evidence="4">
    <location>
        <begin position="82"/>
        <end position="84"/>
    </location>
</feature>
<feature type="strand" evidence="4">
    <location>
        <begin position="87"/>
        <end position="90"/>
    </location>
</feature>
<feature type="strand" evidence="4">
    <location>
        <begin position="93"/>
        <end position="97"/>
    </location>
</feature>
<feature type="strand" evidence="4">
    <location>
        <begin position="100"/>
        <end position="105"/>
    </location>
</feature>
<feature type="helix" evidence="4">
    <location>
        <begin position="107"/>
        <end position="113"/>
    </location>
</feature>
<feature type="strand" evidence="4">
    <location>
        <begin position="116"/>
        <end position="122"/>
    </location>
</feature>
<feature type="helix" evidence="4">
    <location>
        <begin position="125"/>
        <end position="134"/>
    </location>
</feature>
<feature type="strand" evidence="3">
    <location>
        <begin position="135"/>
        <end position="137"/>
    </location>
</feature>
<feature type="helix" evidence="4">
    <location>
        <begin position="145"/>
        <end position="166"/>
    </location>
</feature>
<feature type="strand" evidence="4">
    <location>
        <begin position="169"/>
        <end position="174"/>
    </location>
</feature>
<feature type="helix" evidence="4">
    <location>
        <begin position="180"/>
        <end position="191"/>
    </location>
</feature>
<reference key="1">
    <citation type="journal article" date="1997" name="Gene">
        <title>The adenylate kinase genes of M. voltae, M. thermolithotrophicus, M. jannaschii, and M. igneus define a new family of adenylate kinases.</title>
        <authorList>
            <person name="Ferber D.M."/>
            <person name="Haney P.J."/>
            <person name="Berk H."/>
            <person name="Lynn D."/>
            <person name="Konisky J."/>
        </authorList>
    </citation>
    <scope>NUCLEOTIDE SEQUENCE [GENOMIC DNA]</scope>
</reference>
<reference key="2">
    <citation type="journal article" date="1995" name="J. Bacteriol.">
        <title>The adenylate kinases from a mesophilic and three thermophilic methanogenic members of the Archaea.</title>
        <authorList>
            <person name="Rusnak P."/>
            <person name="Haney P."/>
            <person name="Konisky J."/>
        </authorList>
    </citation>
    <scope>PROTEIN SEQUENCE OF 1-20</scope>
</reference>
<protein>
    <recommendedName>
        <fullName>Adenylate kinase</fullName>
        <shortName>AK</shortName>
        <ecNumber>2.7.4.3</ecNumber>
    </recommendedName>
    <alternativeName>
        <fullName>ATP-AMP transphosphorylase</fullName>
    </alternativeName>
</protein>
<accession>P43410</accession>
<name>KADA_METTL</name>
<dbReference type="EC" id="2.7.4.3"/>
<dbReference type="EMBL" id="U39880">
    <property type="protein sequence ID" value="AAC44864.1"/>
    <property type="molecule type" value="Genomic_DNA"/>
</dbReference>
<dbReference type="PDB" id="1KI9">
    <property type="method" value="X-ray"/>
    <property type="resolution" value="2.76 A"/>
    <property type="chains" value="A/B/C=1-192"/>
</dbReference>
<dbReference type="PDB" id="6HF7">
    <property type="method" value="X-ray"/>
    <property type="resolution" value="1.96 A"/>
    <property type="chains" value="A/B/C=1-192"/>
</dbReference>
<dbReference type="PDBsum" id="1KI9"/>
<dbReference type="PDBsum" id="6HF7"/>
<dbReference type="SMR" id="P43410"/>
<dbReference type="BRENDA" id="2.7.4.3">
    <property type="organism ID" value="3266"/>
</dbReference>
<dbReference type="EvolutionaryTrace" id="P43410"/>
<dbReference type="GO" id="GO:0005737">
    <property type="term" value="C:cytoplasm"/>
    <property type="evidence" value="ECO:0007669"/>
    <property type="project" value="UniProtKB-SubCell"/>
</dbReference>
<dbReference type="GO" id="GO:0004017">
    <property type="term" value="F:adenylate kinase activity"/>
    <property type="evidence" value="ECO:0007669"/>
    <property type="project" value="UniProtKB-UniRule"/>
</dbReference>
<dbReference type="GO" id="GO:0005524">
    <property type="term" value="F:ATP binding"/>
    <property type="evidence" value="ECO:0007669"/>
    <property type="project" value="UniProtKB-UniRule"/>
</dbReference>
<dbReference type="Gene3D" id="3.40.50.300">
    <property type="entry name" value="P-loop containing nucleotide triphosphate hydrolases"/>
    <property type="match status" value="1"/>
</dbReference>
<dbReference type="HAMAP" id="MF_00234">
    <property type="entry name" value="Adenylate_kinase_AdkA"/>
    <property type="match status" value="1"/>
</dbReference>
<dbReference type="InterPro" id="IPR023477">
    <property type="entry name" value="Adenylate_kinase_AdkA"/>
</dbReference>
<dbReference type="InterPro" id="IPR027417">
    <property type="entry name" value="P-loop_NTPase"/>
</dbReference>
<dbReference type="NCBIfam" id="NF003122">
    <property type="entry name" value="PRK04040.1"/>
    <property type="match status" value="1"/>
</dbReference>
<dbReference type="Pfam" id="PF13207">
    <property type="entry name" value="AAA_17"/>
    <property type="match status" value="1"/>
</dbReference>
<dbReference type="SUPFAM" id="SSF52540">
    <property type="entry name" value="P-loop containing nucleoside triphosphate hydrolases"/>
    <property type="match status" value="1"/>
</dbReference>
<evidence type="ECO:0000250" key="1"/>
<evidence type="ECO:0000305" key="2"/>
<evidence type="ECO:0007829" key="3">
    <source>
        <dbReference type="PDB" id="1KI9"/>
    </source>
</evidence>
<evidence type="ECO:0007829" key="4">
    <source>
        <dbReference type="PDB" id="6HF7"/>
    </source>
</evidence>